<name>MTH5_HAEIN</name>
<comment type="function">
    <text evidence="3">A methylase, recognizes the double-stranded sequence 5'-GRCGYC-3', methylates C-? on both strands, and protects the DNA from cleavage by the HindV endonuclease.</text>
</comment>
<comment type="catalytic activity">
    <reaction evidence="2">
        <text>a 2'-deoxycytidine in DNA + S-adenosyl-L-methionine = a 5-methyl-2'-deoxycytidine in DNA + S-adenosyl-L-homocysteine + H(+)</text>
        <dbReference type="Rhea" id="RHEA:13681"/>
        <dbReference type="Rhea" id="RHEA-COMP:11369"/>
        <dbReference type="Rhea" id="RHEA-COMP:11370"/>
        <dbReference type="ChEBI" id="CHEBI:15378"/>
        <dbReference type="ChEBI" id="CHEBI:57856"/>
        <dbReference type="ChEBI" id="CHEBI:59789"/>
        <dbReference type="ChEBI" id="CHEBI:85452"/>
        <dbReference type="ChEBI" id="CHEBI:85454"/>
        <dbReference type="EC" id="2.1.1.37"/>
    </reaction>
</comment>
<comment type="similarity">
    <text evidence="1">Belongs to the class I-like SAM-binding methyltransferase superfamily. C5-methyltransferase family.</text>
</comment>
<feature type="chain" id="PRO_0000087881" description="Type II methyltransferase M.HindV">
    <location>
        <begin position="1"/>
        <end position="304"/>
    </location>
</feature>
<feature type="domain" description="SAM-dependent MTase C5-type" evidence="1">
    <location>
        <begin position="1"/>
        <end position="299"/>
    </location>
</feature>
<feature type="active site" evidence="1 2">
    <location>
        <position position="75"/>
    </location>
</feature>
<gene>
    <name type="primary">hindVM</name>
    <name type="ordered locus">HI_1041</name>
</gene>
<sequence length="304" mass="34366">MKCVDLFSGCGGLSLGFELAGFEICAAFENWEKAIEIYKNNFSHPIYNIDLRNEKEAVEKIKKYSPDLIMGGPPCQDFSSAGKRDISLGRADLTYSFANIVCNIRPKWFVMENVEQIKKSHILQDIINQFIDFGYGLTSAILDASYCGVPQSRTRFSLIGKLNSEHNFLIPTLSRKLSDKPMTVRDYLGNSLNLEFYYRHPRNYNRRGIFSIDEPSPTIRGVNRPIPKGYNINSCDPKGVELAKVRPLTTIERSYIQTFPKSFLFSGTKTDLEQMIGNAVPVNLAKFVASAIINFEKEPIRSMG</sequence>
<proteinExistence type="inferred from homology"/>
<protein>
    <recommendedName>
        <fullName evidence="3">Type II methyltransferase M.HindV</fullName>
        <shortName evidence="3">M.HindV</shortName>
        <ecNumber>2.1.1.37</ecNumber>
    </recommendedName>
    <alternativeName>
        <fullName>Cytosine-specific methyltransferase HindV</fullName>
    </alternativeName>
    <alternativeName>
        <fullName>Modification methylase HindV</fullName>
    </alternativeName>
</protein>
<evidence type="ECO:0000255" key="1">
    <source>
        <dbReference type="PROSITE-ProRule" id="PRU01016"/>
    </source>
</evidence>
<evidence type="ECO:0000255" key="2">
    <source>
        <dbReference type="PROSITE-ProRule" id="PRU10018"/>
    </source>
</evidence>
<evidence type="ECO:0000303" key="3">
    <source>
    </source>
</evidence>
<reference key="1">
    <citation type="journal article" date="1995" name="Science">
        <title>Whole-genome random sequencing and assembly of Haemophilus influenzae Rd.</title>
        <authorList>
            <person name="Fleischmann R.D."/>
            <person name="Adams M.D."/>
            <person name="White O."/>
            <person name="Clayton R.A."/>
            <person name="Kirkness E.F."/>
            <person name="Kerlavage A.R."/>
            <person name="Bult C.J."/>
            <person name="Tomb J.-F."/>
            <person name="Dougherty B.A."/>
            <person name="Merrick J.M."/>
            <person name="McKenney K."/>
            <person name="Sutton G.G."/>
            <person name="FitzHugh W."/>
            <person name="Fields C.A."/>
            <person name="Gocayne J.D."/>
            <person name="Scott J.D."/>
            <person name="Shirley R."/>
            <person name="Liu L.-I."/>
            <person name="Glodek A."/>
            <person name="Kelley J.M."/>
            <person name="Weidman J.F."/>
            <person name="Phillips C.A."/>
            <person name="Spriggs T."/>
            <person name="Hedblom E."/>
            <person name="Cotton M.D."/>
            <person name="Utterback T.R."/>
            <person name="Hanna M.C."/>
            <person name="Nguyen D.T."/>
            <person name="Saudek D.M."/>
            <person name="Brandon R.C."/>
            <person name="Fine L.D."/>
            <person name="Fritchman J.L."/>
            <person name="Fuhrmann J.L."/>
            <person name="Geoghagen N.S.M."/>
            <person name="Gnehm C.L."/>
            <person name="McDonald L.A."/>
            <person name="Small K.V."/>
            <person name="Fraser C.M."/>
            <person name="Smith H.O."/>
            <person name="Venter J.C."/>
        </authorList>
    </citation>
    <scope>NUCLEOTIDE SEQUENCE [LARGE SCALE GENOMIC DNA]</scope>
    <source>
        <strain>ATCC 51907 / DSM 11121 / KW20 / Rd</strain>
    </source>
</reference>
<reference key="2">
    <citation type="journal article" date="2003" name="Nucleic Acids Res.">
        <title>A nomenclature for restriction enzymes, DNA methyltransferases, homing endonucleases and their genes.</title>
        <authorList>
            <person name="Roberts R.J."/>
            <person name="Belfort M."/>
            <person name="Bestor T."/>
            <person name="Bhagwat A.S."/>
            <person name="Bickle T.A."/>
            <person name="Bitinaite J."/>
            <person name="Blumenthal R.M."/>
            <person name="Degtyarev S.K."/>
            <person name="Dryden D.T."/>
            <person name="Dybvig K."/>
            <person name="Firman K."/>
            <person name="Gromova E.S."/>
            <person name="Gumport R.I."/>
            <person name="Halford S.E."/>
            <person name="Hattman S."/>
            <person name="Heitman J."/>
            <person name="Hornby D.P."/>
            <person name="Janulaitis A."/>
            <person name="Jeltsch A."/>
            <person name="Josephsen J."/>
            <person name="Kiss A."/>
            <person name="Klaenhammer T.R."/>
            <person name="Kobayashi I."/>
            <person name="Kong H."/>
            <person name="Krueger D.H."/>
            <person name="Lacks S."/>
            <person name="Marinus M.G."/>
            <person name="Miyahara M."/>
            <person name="Morgan R.D."/>
            <person name="Murray N.E."/>
            <person name="Nagaraja V."/>
            <person name="Piekarowicz A."/>
            <person name="Pingoud A."/>
            <person name="Raleigh E."/>
            <person name="Rao D.N."/>
            <person name="Reich N."/>
            <person name="Repin V.E."/>
            <person name="Selker E.U."/>
            <person name="Shaw P.C."/>
            <person name="Stein D.C."/>
            <person name="Stoddard B.L."/>
            <person name="Szybalski W."/>
            <person name="Trautner T.A."/>
            <person name="Van Etten J.L."/>
            <person name="Vitor J.M."/>
            <person name="Wilson G.G."/>
            <person name="Xu S.Y."/>
        </authorList>
    </citation>
    <scope>NOMENCLATURE</scope>
</reference>
<accession>P45000</accession>
<dbReference type="EC" id="2.1.1.37"/>
<dbReference type="EMBL" id="L42023">
    <property type="protein sequence ID" value="AAC22700.1"/>
    <property type="molecule type" value="Genomic_DNA"/>
</dbReference>
<dbReference type="PIR" id="C64109">
    <property type="entry name" value="C64109"/>
</dbReference>
<dbReference type="RefSeq" id="NP_439200.1">
    <property type="nucleotide sequence ID" value="NC_000907.1"/>
</dbReference>
<dbReference type="SMR" id="P45000"/>
<dbReference type="STRING" id="71421.HI_1041"/>
<dbReference type="REBASE" id="3574">
    <property type="entry name" value="M.HindV"/>
</dbReference>
<dbReference type="EnsemblBacteria" id="AAC22700">
    <property type="protein sequence ID" value="AAC22700"/>
    <property type="gene ID" value="HI_1041"/>
</dbReference>
<dbReference type="KEGG" id="hin:HI_1041"/>
<dbReference type="PATRIC" id="fig|71421.8.peg.1085"/>
<dbReference type="eggNOG" id="COG0270">
    <property type="taxonomic scope" value="Bacteria"/>
</dbReference>
<dbReference type="HOGENOM" id="CLU_006958_2_1_6"/>
<dbReference type="OrthoDB" id="9813719at2"/>
<dbReference type="PhylomeDB" id="P45000"/>
<dbReference type="BioCyc" id="HINF71421:G1GJ1-1080-MONOMER"/>
<dbReference type="PRO" id="PR:P45000"/>
<dbReference type="Proteomes" id="UP000000579">
    <property type="component" value="Chromosome"/>
</dbReference>
<dbReference type="GO" id="GO:0003886">
    <property type="term" value="F:DNA (cytosine-5-)-methyltransferase activity"/>
    <property type="evidence" value="ECO:0007669"/>
    <property type="project" value="UniProtKB-EC"/>
</dbReference>
<dbReference type="GO" id="GO:0003677">
    <property type="term" value="F:DNA binding"/>
    <property type="evidence" value="ECO:0007669"/>
    <property type="project" value="UniProtKB-KW"/>
</dbReference>
<dbReference type="GO" id="GO:0009307">
    <property type="term" value="P:DNA restriction-modification system"/>
    <property type="evidence" value="ECO:0007669"/>
    <property type="project" value="UniProtKB-KW"/>
</dbReference>
<dbReference type="GO" id="GO:0032259">
    <property type="term" value="P:methylation"/>
    <property type="evidence" value="ECO:0007669"/>
    <property type="project" value="UniProtKB-KW"/>
</dbReference>
<dbReference type="CDD" id="cd00315">
    <property type="entry name" value="Cyt_C5_DNA_methylase"/>
    <property type="match status" value="1"/>
</dbReference>
<dbReference type="Gene3D" id="3.90.120.10">
    <property type="entry name" value="DNA Methylase, subunit A, domain 2"/>
    <property type="match status" value="2"/>
</dbReference>
<dbReference type="Gene3D" id="3.40.50.150">
    <property type="entry name" value="Vaccinia Virus protein VP39"/>
    <property type="match status" value="1"/>
</dbReference>
<dbReference type="InterPro" id="IPR050390">
    <property type="entry name" value="C5-Methyltransferase"/>
</dbReference>
<dbReference type="InterPro" id="IPR018117">
    <property type="entry name" value="C5_DNA_meth_AS"/>
</dbReference>
<dbReference type="InterPro" id="IPR001525">
    <property type="entry name" value="C5_MeTfrase"/>
</dbReference>
<dbReference type="InterPro" id="IPR031303">
    <property type="entry name" value="C5_meth_CS"/>
</dbReference>
<dbReference type="InterPro" id="IPR029063">
    <property type="entry name" value="SAM-dependent_MTases_sf"/>
</dbReference>
<dbReference type="NCBIfam" id="TIGR00675">
    <property type="entry name" value="dcm"/>
    <property type="match status" value="1"/>
</dbReference>
<dbReference type="PANTHER" id="PTHR10629">
    <property type="entry name" value="CYTOSINE-SPECIFIC METHYLTRANSFERASE"/>
    <property type="match status" value="1"/>
</dbReference>
<dbReference type="PANTHER" id="PTHR10629:SF52">
    <property type="entry name" value="DNA (CYTOSINE-5)-METHYLTRANSFERASE 1"/>
    <property type="match status" value="1"/>
</dbReference>
<dbReference type="Pfam" id="PF00145">
    <property type="entry name" value="DNA_methylase"/>
    <property type="match status" value="1"/>
</dbReference>
<dbReference type="PRINTS" id="PR00105">
    <property type="entry name" value="C5METTRFRASE"/>
</dbReference>
<dbReference type="SUPFAM" id="SSF53335">
    <property type="entry name" value="S-adenosyl-L-methionine-dependent methyltransferases"/>
    <property type="match status" value="1"/>
</dbReference>
<dbReference type="PROSITE" id="PS00094">
    <property type="entry name" value="C5_MTASE_1"/>
    <property type="match status" value="1"/>
</dbReference>
<dbReference type="PROSITE" id="PS00095">
    <property type="entry name" value="C5_MTASE_2"/>
    <property type="match status" value="1"/>
</dbReference>
<dbReference type="PROSITE" id="PS51679">
    <property type="entry name" value="SAM_MT_C5"/>
    <property type="match status" value="1"/>
</dbReference>
<organism>
    <name type="scientific">Haemophilus influenzae (strain ATCC 51907 / DSM 11121 / KW20 / Rd)</name>
    <dbReference type="NCBI Taxonomy" id="71421"/>
    <lineage>
        <taxon>Bacteria</taxon>
        <taxon>Pseudomonadati</taxon>
        <taxon>Pseudomonadota</taxon>
        <taxon>Gammaproteobacteria</taxon>
        <taxon>Pasteurellales</taxon>
        <taxon>Pasteurellaceae</taxon>
        <taxon>Haemophilus</taxon>
    </lineage>
</organism>
<keyword id="KW-0238">DNA-binding</keyword>
<keyword id="KW-0489">Methyltransferase</keyword>
<keyword id="KW-1185">Reference proteome</keyword>
<keyword id="KW-0680">Restriction system</keyword>
<keyword id="KW-0949">S-adenosyl-L-methionine</keyword>
<keyword id="KW-0808">Transferase</keyword>